<name>TIG_PSEPK</name>
<evidence type="ECO:0000255" key="1">
    <source>
        <dbReference type="HAMAP-Rule" id="MF_00303"/>
    </source>
</evidence>
<evidence type="ECO:0000305" key="2"/>
<reference key="1">
    <citation type="journal article" date="2002" name="Environ. Microbiol.">
        <title>Complete genome sequence and comparative analysis of the metabolically versatile Pseudomonas putida KT2440.</title>
        <authorList>
            <person name="Nelson K.E."/>
            <person name="Weinel C."/>
            <person name="Paulsen I.T."/>
            <person name="Dodson R.J."/>
            <person name="Hilbert H."/>
            <person name="Martins dos Santos V.A.P."/>
            <person name="Fouts D.E."/>
            <person name="Gill S.R."/>
            <person name="Pop M."/>
            <person name="Holmes M."/>
            <person name="Brinkac L.M."/>
            <person name="Beanan M.J."/>
            <person name="DeBoy R.T."/>
            <person name="Daugherty S.C."/>
            <person name="Kolonay J.F."/>
            <person name="Madupu R."/>
            <person name="Nelson W.C."/>
            <person name="White O."/>
            <person name="Peterson J.D."/>
            <person name="Khouri H.M."/>
            <person name="Hance I."/>
            <person name="Chris Lee P."/>
            <person name="Holtzapple E.K."/>
            <person name="Scanlan D."/>
            <person name="Tran K."/>
            <person name="Moazzez A."/>
            <person name="Utterback T.R."/>
            <person name="Rizzo M."/>
            <person name="Lee K."/>
            <person name="Kosack D."/>
            <person name="Moestl D."/>
            <person name="Wedler H."/>
            <person name="Lauber J."/>
            <person name="Stjepandic D."/>
            <person name="Hoheisel J."/>
            <person name="Straetz M."/>
            <person name="Heim S."/>
            <person name="Kiewitz C."/>
            <person name="Eisen J.A."/>
            <person name="Timmis K.N."/>
            <person name="Duesterhoeft A."/>
            <person name="Tuemmler B."/>
            <person name="Fraser C.M."/>
        </authorList>
    </citation>
    <scope>NUCLEOTIDE SEQUENCE [LARGE SCALE GENOMIC DNA]</scope>
    <source>
        <strain>ATCC 47054 / DSM 6125 / CFBP 8728 / NCIMB 11950 / KT2440</strain>
    </source>
</reference>
<keyword id="KW-0131">Cell cycle</keyword>
<keyword id="KW-0132">Cell division</keyword>
<keyword id="KW-0143">Chaperone</keyword>
<keyword id="KW-0963">Cytoplasm</keyword>
<keyword id="KW-0413">Isomerase</keyword>
<keyword id="KW-1185">Reference proteome</keyword>
<keyword id="KW-0697">Rotamase</keyword>
<sequence length="437" mass="48517">MQVSVENTSALERRMTIAVPAERVENEVNKRLQQTAKRAKIAGFRPGKVPMTVIRQRFEADARQEAFGDLVQASFYEAIVEQKLNPAGAPAVEPKSFEKGKDLEFVAIFEVFPEFTVAGLESIKVERLSAEVADSDLDNMLEVLRKQNTRFEAVERAAQNDDQVNIDFVGKVDGEAFAGGSAKGTLLVLGSGRMIPGFEEGLVGAKAGEERVVNVTFPEDYQNLDLAGKAAEFTITVNSVSAPVLPELNEEFFAQFGIKESTLEGFRAEVRKNMERELRQAIKTKVKNQVMDGLLAANPIEVPKALLENEVNRLRVQAVQQFGGNIKPEQLPVELFEEQAKRRVVLGLIVAEVVKQFELKPDDAKVREMIEEMASAYQEPEQVIAWYYKNDQQLNEVRSVVLEEQVVDTVLQKATVTDKSVSYEEAVKPAEAPAAAE</sequence>
<protein>
    <recommendedName>
        <fullName evidence="1">Trigger factor</fullName>
        <shortName evidence="1">TF</shortName>
        <ecNumber evidence="1">5.2.1.8</ecNumber>
    </recommendedName>
    <alternativeName>
        <fullName evidence="1">PPIase</fullName>
    </alternativeName>
</protein>
<feature type="chain" id="PRO_0000179408" description="Trigger factor">
    <location>
        <begin position="1"/>
        <end position="437"/>
    </location>
</feature>
<feature type="domain" description="PPIase FKBP-type" evidence="1">
    <location>
        <begin position="161"/>
        <end position="246"/>
    </location>
</feature>
<accession>Q88KJ1</accession>
<gene>
    <name evidence="1" type="primary">tig</name>
    <name type="ordered locus">PP_2299</name>
</gene>
<comment type="function">
    <text evidence="1">Involved in protein export. Acts as a chaperone by maintaining the newly synthesized protein in an open conformation. Functions as a peptidyl-prolyl cis-trans isomerase.</text>
</comment>
<comment type="catalytic activity">
    <reaction evidence="1">
        <text>[protein]-peptidylproline (omega=180) = [protein]-peptidylproline (omega=0)</text>
        <dbReference type="Rhea" id="RHEA:16237"/>
        <dbReference type="Rhea" id="RHEA-COMP:10747"/>
        <dbReference type="Rhea" id="RHEA-COMP:10748"/>
        <dbReference type="ChEBI" id="CHEBI:83833"/>
        <dbReference type="ChEBI" id="CHEBI:83834"/>
        <dbReference type="EC" id="5.2.1.8"/>
    </reaction>
</comment>
<comment type="subcellular location">
    <subcellularLocation>
        <location>Cytoplasm</location>
    </subcellularLocation>
    <text evidence="1">About half TF is bound to the ribosome near the polypeptide exit tunnel while the other half is free in the cytoplasm.</text>
</comment>
<comment type="domain">
    <text evidence="1">Consists of 3 domains; the N-terminus binds the ribosome, the middle domain has PPIase activity, while the C-terminus has intrinsic chaperone activity on its own.</text>
</comment>
<comment type="similarity">
    <text evidence="1">Belongs to the FKBP-type PPIase family. Tig subfamily.</text>
</comment>
<comment type="sequence caution" evidence="2">
    <conflict type="erroneous initiation">
        <sequence resource="EMBL-CDS" id="AAN67912"/>
    </conflict>
</comment>
<dbReference type="EC" id="5.2.1.8" evidence="1"/>
<dbReference type="EMBL" id="AE015451">
    <property type="protein sequence ID" value="AAN67912.1"/>
    <property type="status" value="ALT_INIT"/>
    <property type="molecule type" value="Genomic_DNA"/>
</dbReference>
<dbReference type="RefSeq" id="NP_744448.1">
    <property type="nucleotide sequence ID" value="NC_002947.4"/>
</dbReference>
<dbReference type="RefSeq" id="WP_014753846.1">
    <property type="nucleotide sequence ID" value="NZ_CP169744.1"/>
</dbReference>
<dbReference type="SMR" id="Q88KJ1"/>
<dbReference type="STRING" id="160488.PP_2299"/>
<dbReference type="PaxDb" id="160488-PP_2299"/>
<dbReference type="GeneID" id="83681185"/>
<dbReference type="KEGG" id="ppu:PP_2299"/>
<dbReference type="PATRIC" id="fig|160488.4.peg.2436"/>
<dbReference type="eggNOG" id="COG0544">
    <property type="taxonomic scope" value="Bacteria"/>
</dbReference>
<dbReference type="HOGENOM" id="CLU_033058_2_0_6"/>
<dbReference type="OrthoDB" id="9767721at2"/>
<dbReference type="PhylomeDB" id="Q88KJ1"/>
<dbReference type="Proteomes" id="UP000000556">
    <property type="component" value="Chromosome"/>
</dbReference>
<dbReference type="GO" id="GO:0005737">
    <property type="term" value="C:cytoplasm"/>
    <property type="evidence" value="ECO:0007669"/>
    <property type="project" value="UniProtKB-SubCell"/>
</dbReference>
<dbReference type="GO" id="GO:0003755">
    <property type="term" value="F:peptidyl-prolyl cis-trans isomerase activity"/>
    <property type="evidence" value="ECO:0007669"/>
    <property type="project" value="UniProtKB-UniRule"/>
</dbReference>
<dbReference type="GO" id="GO:0044183">
    <property type="term" value="F:protein folding chaperone"/>
    <property type="evidence" value="ECO:0007669"/>
    <property type="project" value="TreeGrafter"/>
</dbReference>
<dbReference type="GO" id="GO:0043022">
    <property type="term" value="F:ribosome binding"/>
    <property type="evidence" value="ECO:0007669"/>
    <property type="project" value="TreeGrafter"/>
</dbReference>
<dbReference type="GO" id="GO:0051083">
    <property type="term" value="P:'de novo' cotranslational protein folding"/>
    <property type="evidence" value="ECO:0007669"/>
    <property type="project" value="TreeGrafter"/>
</dbReference>
<dbReference type="GO" id="GO:0051301">
    <property type="term" value="P:cell division"/>
    <property type="evidence" value="ECO:0007669"/>
    <property type="project" value="UniProtKB-KW"/>
</dbReference>
<dbReference type="GO" id="GO:0061077">
    <property type="term" value="P:chaperone-mediated protein folding"/>
    <property type="evidence" value="ECO:0007669"/>
    <property type="project" value="TreeGrafter"/>
</dbReference>
<dbReference type="GO" id="GO:0015031">
    <property type="term" value="P:protein transport"/>
    <property type="evidence" value="ECO:0007669"/>
    <property type="project" value="UniProtKB-UniRule"/>
</dbReference>
<dbReference type="GO" id="GO:0043335">
    <property type="term" value="P:protein unfolding"/>
    <property type="evidence" value="ECO:0007669"/>
    <property type="project" value="TreeGrafter"/>
</dbReference>
<dbReference type="FunFam" id="3.10.50.40:FF:000001">
    <property type="entry name" value="Trigger factor"/>
    <property type="match status" value="1"/>
</dbReference>
<dbReference type="Gene3D" id="3.10.50.40">
    <property type="match status" value="1"/>
</dbReference>
<dbReference type="Gene3D" id="3.30.70.1050">
    <property type="entry name" value="Trigger factor ribosome-binding domain"/>
    <property type="match status" value="1"/>
</dbReference>
<dbReference type="Gene3D" id="1.10.3120.10">
    <property type="entry name" value="Trigger factor, C-terminal domain"/>
    <property type="match status" value="1"/>
</dbReference>
<dbReference type="HAMAP" id="MF_00303">
    <property type="entry name" value="Trigger_factor_Tig"/>
    <property type="match status" value="1"/>
</dbReference>
<dbReference type="InterPro" id="IPR046357">
    <property type="entry name" value="PPIase_dom_sf"/>
</dbReference>
<dbReference type="InterPro" id="IPR001179">
    <property type="entry name" value="PPIase_FKBP_dom"/>
</dbReference>
<dbReference type="InterPro" id="IPR005215">
    <property type="entry name" value="Trig_fac"/>
</dbReference>
<dbReference type="InterPro" id="IPR008880">
    <property type="entry name" value="Trigger_fac_C"/>
</dbReference>
<dbReference type="InterPro" id="IPR037041">
    <property type="entry name" value="Trigger_fac_C_sf"/>
</dbReference>
<dbReference type="InterPro" id="IPR008881">
    <property type="entry name" value="Trigger_fac_ribosome-bd_bac"/>
</dbReference>
<dbReference type="InterPro" id="IPR036611">
    <property type="entry name" value="Trigger_fac_ribosome-bd_sf"/>
</dbReference>
<dbReference type="InterPro" id="IPR027304">
    <property type="entry name" value="Trigger_fact/SurA_dom_sf"/>
</dbReference>
<dbReference type="NCBIfam" id="TIGR00115">
    <property type="entry name" value="tig"/>
    <property type="match status" value="1"/>
</dbReference>
<dbReference type="PANTHER" id="PTHR30560">
    <property type="entry name" value="TRIGGER FACTOR CHAPERONE AND PEPTIDYL-PROLYL CIS/TRANS ISOMERASE"/>
    <property type="match status" value="1"/>
</dbReference>
<dbReference type="PANTHER" id="PTHR30560:SF3">
    <property type="entry name" value="TRIGGER FACTOR-LIKE PROTEIN TIG, CHLOROPLASTIC"/>
    <property type="match status" value="1"/>
</dbReference>
<dbReference type="Pfam" id="PF00254">
    <property type="entry name" value="FKBP_C"/>
    <property type="match status" value="1"/>
</dbReference>
<dbReference type="Pfam" id="PF05698">
    <property type="entry name" value="Trigger_C"/>
    <property type="match status" value="1"/>
</dbReference>
<dbReference type="Pfam" id="PF05697">
    <property type="entry name" value="Trigger_N"/>
    <property type="match status" value="1"/>
</dbReference>
<dbReference type="PIRSF" id="PIRSF003095">
    <property type="entry name" value="Trigger_factor"/>
    <property type="match status" value="1"/>
</dbReference>
<dbReference type="SUPFAM" id="SSF54534">
    <property type="entry name" value="FKBP-like"/>
    <property type="match status" value="1"/>
</dbReference>
<dbReference type="SUPFAM" id="SSF109998">
    <property type="entry name" value="Triger factor/SurA peptide-binding domain-like"/>
    <property type="match status" value="1"/>
</dbReference>
<dbReference type="SUPFAM" id="SSF102735">
    <property type="entry name" value="Trigger factor ribosome-binding domain"/>
    <property type="match status" value="1"/>
</dbReference>
<dbReference type="PROSITE" id="PS50059">
    <property type="entry name" value="FKBP_PPIASE"/>
    <property type="match status" value="1"/>
</dbReference>
<proteinExistence type="inferred from homology"/>
<organism>
    <name type="scientific">Pseudomonas putida (strain ATCC 47054 / DSM 6125 / CFBP 8728 / NCIMB 11950 / KT2440)</name>
    <dbReference type="NCBI Taxonomy" id="160488"/>
    <lineage>
        <taxon>Bacteria</taxon>
        <taxon>Pseudomonadati</taxon>
        <taxon>Pseudomonadota</taxon>
        <taxon>Gammaproteobacteria</taxon>
        <taxon>Pseudomonadales</taxon>
        <taxon>Pseudomonadaceae</taxon>
        <taxon>Pseudomonas</taxon>
    </lineage>
</organism>